<keyword id="KW-0378">Hydrolase</keyword>
<keyword id="KW-0611">Plant defense</keyword>
<keyword id="KW-0652">Protein synthesis inhibitor</keyword>
<keyword id="KW-0800">Toxin</keyword>
<dbReference type="EC" id="3.2.2.22"/>
<dbReference type="EMBL" id="X69131">
    <property type="protein sequence ID" value="CAA48885.1"/>
    <property type="molecule type" value="Genomic_DNA"/>
</dbReference>
<dbReference type="EMBL" id="X69132">
    <property type="protein sequence ID" value="CAA48886.1"/>
    <property type="molecule type" value="Genomic_DNA"/>
</dbReference>
<dbReference type="PIR" id="S16487">
    <property type="entry name" value="S16487"/>
</dbReference>
<dbReference type="PIR" id="S28539">
    <property type="entry name" value="S28539"/>
</dbReference>
<dbReference type="PIR" id="S38527">
    <property type="entry name" value="S38527"/>
</dbReference>
<dbReference type="SMR" id="Q41389"/>
<dbReference type="Allergome" id="2805">
    <property type="allergen name" value="Sap o RIP"/>
</dbReference>
<dbReference type="GO" id="GO:0030598">
    <property type="term" value="F:rRNA N-glycosylase activity"/>
    <property type="evidence" value="ECO:0007669"/>
    <property type="project" value="UniProtKB-EC"/>
</dbReference>
<dbReference type="GO" id="GO:0090729">
    <property type="term" value="F:toxin activity"/>
    <property type="evidence" value="ECO:0007669"/>
    <property type="project" value="UniProtKB-KW"/>
</dbReference>
<dbReference type="GO" id="GO:0006952">
    <property type="term" value="P:defense response"/>
    <property type="evidence" value="ECO:0007669"/>
    <property type="project" value="UniProtKB-KW"/>
</dbReference>
<dbReference type="GO" id="GO:0017148">
    <property type="term" value="P:negative regulation of translation"/>
    <property type="evidence" value="ECO:0007669"/>
    <property type="project" value="UniProtKB-KW"/>
</dbReference>
<dbReference type="Gene3D" id="3.40.420.10">
    <property type="entry name" value="Ricin (A subunit), domain 1"/>
    <property type="match status" value="1"/>
</dbReference>
<dbReference type="Gene3D" id="4.10.470.10">
    <property type="entry name" value="Ricin (A Subunit), domain 2"/>
    <property type="match status" value="1"/>
</dbReference>
<dbReference type="InterPro" id="IPR036041">
    <property type="entry name" value="Ribosome-inact_prot_sf"/>
</dbReference>
<dbReference type="InterPro" id="IPR017989">
    <property type="entry name" value="Ribosome_inactivat_1/2"/>
</dbReference>
<dbReference type="InterPro" id="IPR001574">
    <property type="entry name" value="Ribosome_inactivat_prot"/>
</dbReference>
<dbReference type="InterPro" id="IPR017988">
    <property type="entry name" value="Ribosome_inactivat_prot_CS"/>
</dbReference>
<dbReference type="InterPro" id="IPR016138">
    <property type="entry name" value="Ribosome_inactivat_prot_sub1"/>
</dbReference>
<dbReference type="InterPro" id="IPR016139">
    <property type="entry name" value="Ribosome_inactivat_prot_sub2"/>
</dbReference>
<dbReference type="PANTHER" id="PTHR33453">
    <property type="match status" value="1"/>
</dbReference>
<dbReference type="PANTHER" id="PTHR33453:SF34">
    <property type="entry name" value="RIBOSOME-INACTIVATING PROTEIN"/>
    <property type="match status" value="1"/>
</dbReference>
<dbReference type="Pfam" id="PF00161">
    <property type="entry name" value="RIP"/>
    <property type="match status" value="1"/>
</dbReference>
<dbReference type="PRINTS" id="PR00396">
    <property type="entry name" value="SHIGARICIN"/>
</dbReference>
<dbReference type="SUPFAM" id="SSF56371">
    <property type="entry name" value="Ribosome inactivating proteins (RIP)"/>
    <property type="match status" value="1"/>
</dbReference>
<dbReference type="PROSITE" id="PS00275">
    <property type="entry name" value="SHIGA_RICIN"/>
    <property type="match status" value="1"/>
</dbReference>
<name>RIP5_SAPOF</name>
<organism>
    <name type="scientific">Saponaria officinalis</name>
    <name type="common">Common soapwort</name>
    <name type="synonym">Lychnis saponaria</name>
    <dbReference type="NCBI Taxonomy" id="3572"/>
    <lineage>
        <taxon>Eukaryota</taxon>
        <taxon>Viridiplantae</taxon>
        <taxon>Streptophyta</taxon>
        <taxon>Embryophyta</taxon>
        <taxon>Tracheophyta</taxon>
        <taxon>Spermatophyta</taxon>
        <taxon>Magnoliopsida</taxon>
        <taxon>eudicotyledons</taxon>
        <taxon>Gunneridae</taxon>
        <taxon>Pentapetalae</taxon>
        <taxon>Caryophyllales</taxon>
        <taxon>Caryophyllaceae</taxon>
        <taxon>Caryophylleae</taxon>
        <taxon>Saponaria</taxon>
    </lineage>
</organism>
<reference key="1">
    <citation type="journal article" date="1993" name="J. Biol. Chem.">
        <title>The expression of saporin, a ribosome-inactivating protein from the plant Saponaria officinalis, in Escherichia coli.</title>
        <authorList>
            <person name="Barthelemy I."/>
            <person name="Martineau D."/>
            <person name="Ong M."/>
            <person name="Matsunami R."/>
            <person name="Ling N."/>
            <person name="Benatti L."/>
            <person name="Cavallaro U."/>
            <person name="Soria M."/>
            <person name="Lappi D.A."/>
        </authorList>
    </citation>
    <scope>NUCLEOTIDE SEQUENCE [GENOMIC DNA]</scope>
    <source>
        <tissue>Leaf</tissue>
    </source>
</reference>
<gene>
    <name type="primary">SAP5</name>
</gene>
<comment type="function">
    <text evidence="1">Ribosome-inactivating protein of type 1, inhibits protein synthesis in animal cells.</text>
</comment>
<comment type="catalytic activity">
    <reaction>
        <text>Endohydrolysis of the N-glycosidic bond at one specific adenosine on the 28S rRNA.</text>
        <dbReference type="EC" id="3.2.2.22"/>
    </reaction>
</comment>
<comment type="similarity">
    <text evidence="2">Belongs to the ribosome-inactivating protein family. Type 1 RIP subfamily.</text>
</comment>
<evidence type="ECO:0000250" key="1"/>
<evidence type="ECO:0000305" key="2"/>
<sequence>VTSITLDLVNPTAGQYSSFVDKIRNNVKDPNLKYGGTDIAVIGPPSKEKFLRINFQSSRGTVSLGLKRDNLYVVAYLAMDNTNVNRAYYFRSEITSAELTALFPEATTANQKALEYTEDYQSIEKNAQITQGDKSRKELGLGIDLLLTSMEAVNKKARVVKNEARFLLIAIQMTAEVARFRYIQNLVTKNFPNKFDSDNKVIQFEVSWRKISTAIYGDAKNGVFNKDYDFGFGKVRQVKDLQMGLLMYLGKPK</sequence>
<feature type="chain" id="PRO_0000221413" description="Ribosome-inactivating protein saporin-5">
    <location>
        <begin position="1"/>
        <end position="253"/>
    </location>
</feature>
<feature type="active site" evidence="1">
    <location>
        <position position="176"/>
    </location>
</feature>
<protein>
    <recommendedName>
        <fullName>Ribosome-inactivating protein saporin-5</fullName>
        <shortName>SAP-5</shortName>
        <ecNumber>3.2.2.22</ecNumber>
    </recommendedName>
    <alternativeName>
        <fullName>rRNA N-glycosidase</fullName>
    </alternativeName>
</protein>
<proteinExistence type="inferred from homology"/>
<accession>Q41389</accession>